<name>NRAM2_MOUSE</name>
<protein>
    <recommendedName>
        <fullName>Natural resistance-associated macrophage protein 2</fullName>
        <shortName>NRAMP 2</shortName>
    </recommendedName>
    <alternativeName>
        <fullName>Divalent cation transporter 1</fullName>
    </alternativeName>
    <alternativeName>
        <fullName>Divalent metal transporter 1</fullName>
        <shortName>DMT-1</shortName>
    </alternativeName>
    <alternativeName>
        <fullName>Solute carrier family 11 member 2</fullName>
    </alternativeName>
</protein>
<comment type="function">
    <text evidence="1 2 6 8">Proton-coupled metal ion symporter operating with a proton to metal ion stoichiometry of 1:1 (PubMed:16475818). Selectively transports various divalent metal cations, in decreasing affinity: Cd(2+) &gt; Fe(2+) &gt; Co(2+), Mn(2+) &gt;&gt; Zn(2+), Ni(2+), VO(2+) (By similarity) (PubMed:16475818). Essential for maintenance of iron homeostasis by modulating intestinal absorption of dietary Fe(2+) and TF-associated endosomal Fe(2+) transport in erythroid precursors and other cells (PubMed:11739192). Enables Fe(2+) and Mn(2+) ion entry into mitochondria, and is thus expected to promote mitochondrial heme synthesis, iron-sulfur cluster biogenesis and antioxidant defense (By similarity). Can mediate uncoupled fluxes of either protons or metal ions.</text>
</comment>
<comment type="catalytic activity">
    <molecule>Isoform 1</molecule>
    <reaction evidence="8">
        <text>Fe(2+)(in) + H(+)(in) = Fe(2+)(out) + H(+)(out)</text>
        <dbReference type="Rhea" id="RHEA:29579"/>
        <dbReference type="ChEBI" id="CHEBI:15378"/>
        <dbReference type="ChEBI" id="CHEBI:29033"/>
    </reaction>
    <physiologicalReaction direction="left-to-right" evidence="1">
        <dbReference type="Rhea" id="RHEA:29580"/>
    </physiologicalReaction>
    <physiologicalReaction direction="right-to-left" evidence="15">
        <dbReference type="Rhea" id="RHEA:29581"/>
    </physiologicalReaction>
</comment>
<comment type="catalytic activity">
    <molecule>Isoform 1</molecule>
    <reaction evidence="8">
        <text>Co(2+)(out) + H(+)(out) = Co(2+)(in) + H(+)(in)</text>
        <dbReference type="Rhea" id="RHEA:73035"/>
        <dbReference type="ChEBI" id="CHEBI:15378"/>
        <dbReference type="ChEBI" id="CHEBI:48828"/>
    </reaction>
    <physiologicalReaction direction="left-to-right" evidence="15">
        <dbReference type="Rhea" id="RHEA:73036"/>
    </physiologicalReaction>
</comment>
<comment type="catalytic activity">
    <molecule>Isoform 2</molecule>
    <reaction evidence="8">
        <text>Fe(2+)(in) + H(+)(in) = Fe(2+)(out) + H(+)(out)</text>
        <dbReference type="Rhea" id="RHEA:29579"/>
        <dbReference type="ChEBI" id="CHEBI:15378"/>
        <dbReference type="ChEBI" id="CHEBI:29033"/>
    </reaction>
    <physiologicalReaction direction="left-to-right" evidence="1">
        <dbReference type="Rhea" id="RHEA:29580"/>
    </physiologicalReaction>
    <physiologicalReaction direction="right-to-left" evidence="15">
        <dbReference type="Rhea" id="RHEA:29581"/>
    </physiologicalReaction>
</comment>
<comment type="catalytic activity">
    <molecule>Isoform 2</molecule>
    <reaction evidence="8">
        <text>Co(2+)(out) + H(+)(out) = Co(2+)(in) + H(+)(in)</text>
        <dbReference type="Rhea" id="RHEA:73035"/>
        <dbReference type="ChEBI" id="CHEBI:15378"/>
        <dbReference type="ChEBI" id="CHEBI:48828"/>
    </reaction>
    <physiologicalReaction direction="left-to-right" evidence="15">
        <dbReference type="Rhea" id="RHEA:73036"/>
    </physiologicalReaction>
</comment>
<comment type="catalytic activity">
    <reaction evidence="1">
        <text>Cd(2+)(out) + H(+)(out) = Cd(2+)(in) + H(+)(in)</text>
        <dbReference type="Rhea" id="RHEA:73031"/>
        <dbReference type="ChEBI" id="CHEBI:15378"/>
        <dbReference type="ChEBI" id="CHEBI:48775"/>
    </reaction>
    <physiologicalReaction direction="left-to-right" evidence="1">
        <dbReference type="Rhea" id="RHEA:73032"/>
    </physiologicalReaction>
</comment>
<comment type="catalytic activity">
    <reaction evidence="1 2">
        <text>Mn(2+)(in) + H(+)(in) = Mn(2+)(out) + H(+)(out)</text>
        <dbReference type="Rhea" id="RHEA:29007"/>
        <dbReference type="ChEBI" id="CHEBI:15378"/>
        <dbReference type="ChEBI" id="CHEBI:29035"/>
    </reaction>
    <physiologicalReaction direction="left-to-right" evidence="1">
        <dbReference type="Rhea" id="RHEA:29008"/>
    </physiologicalReaction>
    <physiologicalReaction direction="right-to-left" evidence="1 2">
        <dbReference type="Rhea" id="RHEA:29009"/>
    </physiologicalReaction>
</comment>
<comment type="catalytic activity">
    <reaction evidence="1 2">
        <text>Zn(2+)(out) + H(+)(out) = Zn(2+)(in) + H(+)(in)</text>
        <dbReference type="Rhea" id="RHEA:71195"/>
        <dbReference type="ChEBI" id="CHEBI:15378"/>
        <dbReference type="ChEBI" id="CHEBI:29105"/>
    </reaction>
    <physiologicalReaction direction="left-to-right" evidence="1 2">
        <dbReference type="Rhea" id="RHEA:71196"/>
    </physiologicalReaction>
</comment>
<comment type="catalytic activity">
    <reaction evidence="1 2">
        <text>Ni(2+)(out) + H(+)(out) = Ni(2+)(in) + H(+)(in)</text>
        <dbReference type="Rhea" id="RHEA:73039"/>
        <dbReference type="ChEBI" id="CHEBI:15378"/>
        <dbReference type="ChEBI" id="CHEBI:49786"/>
    </reaction>
    <physiologicalReaction direction="left-to-right" evidence="1 2">
        <dbReference type="Rhea" id="RHEA:73040"/>
    </physiologicalReaction>
</comment>
<comment type="catalytic activity">
    <reaction evidence="2">
        <text>H(+)(in) = H(+)(out)</text>
        <dbReference type="Rhea" id="RHEA:34979"/>
        <dbReference type="ChEBI" id="CHEBI:15378"/>
    </reaction>
</comment>
<comment type="catalytic activity">
    <reaction evidence="2">
        <text>Fe(2+)(in) = Fe(2+)(out)</text>
        <dbReference type="Rhea" id="RHEA:28486"/>
        <dbReference type="ChEBI" id="CHEBI:29033"/>
    </reaction>
</comment>
<comment type="subunit">
    <text evidence="2 9">Forms a complex with NDFIP1 and NEDD4L, in cortical neurons, in response to iron and cobalt exposure; this interaction leads to SLC11A2 ubiquitination by NEDD4L and proteasome-dependent degradation (By similarity). Interacts with NDFIP1, NDFIP2 and WWP2; this interaction leads to SLC11A2 ubiquitination by WWP2 and subsequent proteasome-dependent degradation (PubMed:18776082). Interacts with COX2 and TOM6 at the outer mitochondrion membrane (By similarity). Interacts with ARRDC1; this interaction regulates the incorporation of SLC11A2 into extracellular vesicles through an ubiquitination-dependent mechanism (By similarity). Interacts with ARRDC4; controls the incorporation of SLC11A2 into extracellular vesicles through an ubiquitination-dependent mechanism (By similarity).</text>
</comment>
<comment type="subcellular location">
    <molecule>Isoform 1</molecule>
    <subcellularLocation>
        <location evidence="9">Golgi apparatus</location>
        <location evidence="9">trans-Golgi network membrane</location>
        <topology evidence="3">Multi-pass membrane protein</topology>
    </subcellularLocation>
    <subcellularLocation>
        <location evidence="8 9">Early endosome membrane</location>
        <topology evidence="3">Multi-pass membrane protein</topology>
    </subcellularLocation>
    <subcellularLocation>
        <location evidence="8">Recycling endosome membrane</location>
        <topology evidence="3">Multi-pass membrane protein</topology>
    </subcellularLocation>
    <subcellularLocation>
        <location evidence="8">Cell membrane</location>
        <topology evidence="3">Multi-pass membrane protein</topology>
    </subcellularLocation>
</comment>
<comment type="subcellular location">
    <molecule>Isoform 2</molecule>
    <subcellularLocation>
        <location evidence="9">Golgi apparatus</location>
        <location evidence="9">trans-Golgi network membrane</location>
        <topology evidence="3">Multi-pass membrane protein</topology>
    </subcellularLocation>
    <subcellularLocation>
        <location evidence="9">Early endosome membrane</location>
        <topology evidence="3">Multi-pass membrane protein</topology>
    </subcellularLocation>
    <subcellularLocation>
        <location evidence="8">Late endosome membrane</location>
        <topology evidence="3">Multi-pass membrane protein</topology>
    </subcellularLocation>
    <subcellularLocation>
        <location evidence="8">Lysosome membrane</location>
        <topology evidence="3">Multi-pass membrane protein</topology>
    </subcellularLocation>
    <subcellularLocation>
        <location evidence="8">Cell membrane</location>
        <topology evidence="3">Multi-pass membrane protein</topology>
    </subcellularLocation>
</comment>
<comment type="subcellular location">
    <subcellularLocation>
        <location evidence="2">Apical cell membrane</location>
        <topology evidence="3">Multi-pass membrane protein</topology>
    </subcellularLocation>
    <subcellularLocation>
        <location evidence="2">Mitochondrion outer membrane</location>
        <topology evidence="3">Multi-pass membrane protein</topology>
    </subcellularLocation>
    <subcellularLocation>
        <location evidence="10">Extracellular vesicle membrane</location>
        <topology evidence="3">Multi-pass membrane protein</topology>
    </subcellularLocation>
</comment>
<comment type="alternative products">
    <event type="alternative splicing"/>
    <isoform>
        <id>P49282-1</id>
        <name>2</name>
        <name>Non-IRE</name>
        <sequence type="displayed"/>
    </isoform>
    <isoform>
        <id>P49282-2</id>
        <name>1</name>
        <name>IRE</name>
        <sequence type="described" ref="VSP_003596"/>
    </isoform>
    <isoform>
        <id>P49282-3</id>
        <name>3</name>
        <name>1A-IRE</name>
        <sequence type="described" ref="VSP_038145 VSP_003596"/>
    </isoform>
    <isoform>
        <id>P49282-4</id>
        <name>4</name>
        <name>1A-Non-IRE</name>
        <sequence type="described" ref="VSP_038145"/>
    </isoform>
</comment>
<comment type="tissue specificity">
    <molecule>Isoform 1</molecule>
    <text evidence="6">Abundantly expressed in erythroid precursor cells (at protein level).</text>
</comment>
<comment type="tissue specificity">
    <molecule>Isoform 2</molecule>
    <text evidence="5">Expressed in duodenum (at protein level).</text>
</comment>
<comment type="induction">
    <molecule>Isoform 2</molecule>
    <text evidence="5">Up-regulated under iron-depletion conditions in the proximal portion of the duodenum where it is abundantly expressed in the brush border of absorptive epithelial cells (at protein level).</text>
</comment>
<comment type="PTM">
    <text evidence="9">Ubiquitinated by WWP2.</text>
</comment>
<comment type="PTM">
    <text evidence="2">N-glycosylated.</text>
</comment>
<comment type="disease">
    <text>Defects in Slc11a2 are the cause of microcytic anemia (mk). Homozygous mk/mk mice have hypochromic microcytic anemia due to severe defects in intestinal iron absorption and erythroid iron utilization.</text>
</comment>
<comment type="disruption phenotype">
    <text evidence="7">Mice display no apparent anatomical abnormalities. They are however anemic, show progressive postnatal growth retardation, and at birth have elevated liver iron stores compared with wild-type littermates. None survive for more than 7 days. Heterozygotes appear normal, showing no significant hematological abnormalities. However, by 8 weeks, their liver iron content is lower than in wild-type littermates.</text>
</comment>
<comment type="miscellaneous">
    <text>Nifedipine induces duodenal iron accumulation and mobilizes iron from the liver of iron-overloaded mice.</text>
</comment>
<comment type="similarity">
    <text evidence="14">Belongs to the NRAMP family.</text>
</comment>
<comment type="sequence caution" evidence="14">
    <conflict type="frameshift">
        <sequence resource="EMBL-CDS" id="CAD38518"/>
    </conflict>
</comment>
<accession>P49282</accession>
<accession>O54903</accession>
<accession>Q3UFV5</accession>
<accession>Q8BJL2</accession>
<accession>Q8BWV3</accession>
<accession>Q8CFA0</accession>
<accession>Q8VCU6</accession>
<evidence type="ECO:0000250" key="1">
    <source>
        <dbReference type="UniProtKB" id="O54902"/>
    </source>
</evidence>
<evidence type="ECO:0000250" key="2">
    <source>
        <dbReference type="UniProtKB" id="P49281"/>
    </source>
</evidence>
<evidence type="ECO:0000255" key="3"/>
<evidence type="ECO:0000256" key="4">
    <source>
        <dbReference type="SAM" id="MobiDB-lite"/>
    </source>
</evidence>
<evidence type="ECO:0000269" key="5">
    <source>
    </source>
</evidence>
<evidence type="ECO:0000269" key="6">
    <source>
    </source>
</evidence>
<evidence type="ECO:0000269" key="7">
    <source>
    </source>
</evidence>
<evidence type="ECO:0000269" key="8">
    <source>
    </source>
</evidence>
<evidence type="ECO:0000269" key="9">
    <source>
    </source>
</evidence>
<evidence type="ECO:0000269" key="10">
    <source>
    </source>
</evidence>
<evidence type="ECO:0000269" key="11">
    <source>
    </source>
</evidence>
<evidence type="ECO:0000303" key="12">
    <source>
    </source>
</evidence>
<evidence type="ECO:0000303" key="13">
    <source ref="2"/>
</evidence>
<evidence type="ECO:0000305" key="14"/>
<evidence type="ECO:0000305" key="15">
    <source>
    </source>
</evidence>
<evidence type="ECO:0007744" key="16">
    <source>
    </source>
</evidence>
<evidence type="ECO:0007744" key="17">
    <source>
    </source>
</evidence>
<proteinExistence type="evidence at protein level"/>
<dbReference type="EMBL" id="L33415">
    <property type="protein sequence ID" value="AAC42051.1"/>
    <property type="molecule type" value="mRNA"/>
</dbReference>
<dbReference type="EMBL" id="AF029758">
    <property type="protein sequence ID" value="AAC24496.1"/>
    <property type="molecule type" value="mRNA"/>
</dbReference>
<dbReference type="EMBL" id="AK049856">
    <property type="protein sequence ID" value="BAC33960.1"/>
    <property type="molecule type" value="mRNA"/>
</dbReference>
<dbReference type="EMBL" id="AK083478">
    <property type="protein sequence ID" value="BAC38930.1"/>
    <property type="molecule type" value="mRNA"/>
</dbReference>
<dbReference type="EMBL" id="AK148276">
    <property type="protein sequence ID" value="BAE28454.1"/>
    <property type="molecule type" value="mRNA"/>
</dbReference>
<dbReference type="EMBL" id="CH466550">
    <property type="protein sequence ID" value="EDL04090.1"/>
    <property type="molecule type" value="Genomic_DNA"/>
</dbReference>
<dbReference type="EMBL" id="BC019137">
    <property type="protein sequence ID" value="AAH19137.1"/>
    <property type="molecule type" value="mRNA"/>
</dbReference>
<dbReference type="EMBL" id="AJ493663">
    <property type="protein sequence ID" value="CAD38518.1"/>
    <property type="status" value="ALT_FRAME"/>
    <property type="molecule type" value="mRNA"/>
</dbReference>
<dbReference type="CCDS" id="CCDS37211.1">
    <molecule id="P49282-1"/>
</dbReference>
<dbReference type="CCDS" id="CCDS49733.1">
    <molecule id="P49282-2"/>
</dbReference>
<dbReference type="PIR" id="A56852">
    <property type="entry name" value="A56852"/>
</dbReference>
<dbReference type="RefSeq" id="NP_001139633.1">
    <molecule id="P49282-2"/>
    <property type="nucleotide sequence ID" value="NM_001146161.1"/>
</dbReference>
<dbReference type="RefSeq" id="NP_032758.2">
    <molecule id="P49282-1"/>
    <property type="nucleotide sequence ID" value="NM_008732.2"/>
</dbReference>
<dbReference type="RefSeq" id="XP_006520640.1">
    <molecule id="P49282-1"/>
    <property type="nucleotide sequence ID" value="XM_006520577.5"/>
</dbReference>
<dbReference type="RefSeq" id="XP_006520641.1">
    <molecule id="P49282-1"/>
    <property type="nucleotide sequence ID" value="XM_006520578.4"/>
</dbReference>
<dbReference type="RefSeq" id="XP_011243789.1">
    <molecule id="P49282-4"/>
    <property type="nucleotide sequence ID" value="XM_011245487.3"/>
</dbReference>
<dbReference type="SMR" id="P49282"/>
<dbReference type="FunCoup" id="P49282">
    <property type="interactions" value="2496"/>
</dbReference>
<dbReference type="STRING" id="10090.ENSMUSP00000023774"/>
<dbReference type="GlyCosmos" id="P49282">
    <property type="glycosylation" value="2 sites, No reported glycans"/>
</dbReference>
<dbReference type="GlyGen" id="P49282">
    <property type="glycosylation" value="2 sites, 2 N-linked glycans (2 sites)"/>
</dbReference>
<dbReference type="iPTMnet" id="P49282"/>
<dbReference type="PhosphoSitePlus" id="P49282"/>
<dbReference type="SwissPalm" id="P49282"/>
<dbReference type="jPOST" id="P49282"/>
<dbReference type="PaxDb" id="10090-ENSMUSP00000023774"/>
<dbReference type="PeptideAtlas" id="P49282"/>
<dbReference type="ProteomicsDB" id="253101">
    <molecule id="P49282-1"/>
</dbReference>
<dbReference type="ProteomicsDB" id="253102">
    <molecule id="P49282-2"/>
</dbReference>
<dbReference type="ProteomicsDB" id="253103">
    <molecule id="P49282-3"/>
</dbReference>
<dbReference type="ProteomicsDB" id="253104">
    <molecule id="P49282-4"/>
</dbReference>
<dbReference type="Antibodypedia" id="26282">
    <property type="antibodies" value="371 antibodies from 32 providers"/>
</dbReference>
<dbReference type="DNASU" id="18174"/>
<dbReference type="Ensembl" id="ENSMUST00000023774.12">
    <molecule id="P49282-1"/>
    <property type="protein sequence ID" value="ENSMUSP00000023774.6"/>
    <property type="gene ID" value="ENSMUSG00000023030.17"/>
</dbReference>
<dbReference type="Ensembl" id="ENSMUST00000138843.8">
    <molecule id="P49282-2"/>
    <property type="protein sequence ID" value="ENSMUSP00000116463.2"/>
    <property type="gene ID" value="ENSMUSG00000023030.17"/>
</dbReference>
<dbReference type="GeneID" id="18174"/>
<dbReference type="KEGG" id="mmu:18174"/>
<dbReference type="UCSC" id="uc007xrc.2">
    <molecule id="P49282-1"/>
    <property type="organism name" value="mouse"/>
</dbReference>
<dbReference type="UCSC" id="uc007xrd.2">
    <molecule id="P49282-2"/>
    <property type="organism name" value="mouse"/>
</dbReference>
<dbReference type="AGR" id="MGI:1345279"/>
<dbReference type="CTD" id="4891"/>
<dbReference type="MGI" id="MGI:1345279">
    <property type="gene designation" value="Slc11a2"/>
</dbReference>
<dbReference type="VEuPathDB" id="HostDB:ENSMUSG00000023030"/>
<dbReference type="eggNOG" id="KOG1291">
    <property type="taxonomic scope" value="Eukaryota"/>
</dbReference>
<dbReference type="GeneTree" id="ENSGT00940000155330"/>
<dbReference type="HOGENOM" id="CLU_020088_5_2_1"/>
<dbReference type="InParanoid" id="P49282"/>
<dbReference type="OMA" id="PWMQFYQ"/>
<dbReference type="OrthoDB" id="409173at2759"/>
<dbReference type="PhylomeDB" id="P49282"/>
<dbReference type="TreeFam" id="TF315185"/>
<dbReference type="Reactome" id="R-MMU-425410">
    <property type="pathway name" value="Metal ion SLC transporters"/>
</dbReference>
<dbReference type="Reactome" id="R-MMU-917937">
    <property type="pathway name" value="Iron uptake and transport"/>
</dbReference>
<dbReference type="BioGRID-ORCS" id="18174">
    <property type="hits" value="1 hit in 77 CRISPR screens"/>
</dbReference>
<dbReference type="ChiTaRS" id="Slc11a2">
    <property type="organism name" value="mouse"/>
</dbReference>
<dbReference type="PRO" id="PR:P49282"/>
<dbReference type="Proteomes" id="UP000000589">
    <property type="component" value="Chromosome 15"/>
</dbReference>
<dbReference type="RNAct" id="P49282">
    <property type="molecule type" value="protein"/>
</dbReference>
<dbReference type="Bgee" id="ENSMUSG00000023030">
    <property type="expression patterns" value="Expressed in epithelium of small intestine and 246 other cell types or tissues"/>
</dbReference>
<dbReference type="ExpressionAtlas" id="P49282">
    <property type="expression patterns" value="baseline and differential"/>
</dbReference>
<dbReference type="GO" id="GO:0016324">
    <property type="term" value="C:apical plasma membrane"/>
    <property type="evidence" value="ECO:0007669"/>
    <property type="project" value="UniProtKB-SubCell"/>
</dbReference>
<dbReference type="GO" id="GO:0045178">
    <property type="term" value="C:basal part of cell"/>
    <property type="evidence" value="ECO:0007669"/>
    <property type="project" value="Ensembl"/>
</dbReference>
<dbReference type="GO" id="GO:0005903">
    <property type="term" value="C:brush border"/>
    <property type="evidence" value="ECO:0000314"/>
    <property type="project" value="MGI"/>
</dbReference>
<dbReference type="GO" id="GO:0031526">
    <property type="term" value="C:brush border membrane"/>
    <property type="evidence" value="ECO:0000316"/>
    <property type="project" value="BHF-UCL"/>
</dbReference>
<dbReference type="GO" id="GO:0009986">
    <property type="term" value="C:cell surface"/>
    <property type="evidence" value="ECO:0000314"/>
    <property type="project" value="MGI"/>
</dbReference>
<dbReference type="GO" id="GO:0005769">
    <property type="term" value="C:early endosome"/>
    <property type="evidence" value="ECO:0000314"/>
    <property type="project" value="MGI"/>
</dbReference>
<dbReference type="GO" id="GO:0031901">
    <property type="term" value="C:early endosome membrane"/>
    <property type="evidence" value="ECO:0007669"/>
    <property type="project" value="UniProtKB-SubCell"/>
</dbReference>
<dbReference type="GO" id="GO:0012505">
    <property type="term" value="C:endomembrane system"/>
    <property type="evidence" value="ECO:0000314"/>
    <property type="project" value="MGI"/>
</dbReference>
<dbReference type="GO" id="GO:0005768">
    <property type="term" value="C:endosome"/>
    <property type="evidence" value="ECO:0000314"/>
    <property type="project" value="MGI"/>
</dbReference>
<dbReference type="GO" id="GO:1903561">
    <property type="term" value="C:extracellular vesicle"/>
    <property type="evidence" value="ECO:0000314"/>
    <property type="project" value="UniProtKB"/>
</dbReference>
<dbReference type="GO" id="GO:0005794">
    <property type="term" value="C:Golgi apparatus"/>
    <property type="evidence" value="ECO:0007669"/>
    <property type="project" value="UniProtKB-SubCell"/>
</dbReference>
<dbReference type="GO" id="GO:0031902">
    <property type="term" value="C:late endosome membrane"/>
    <property type="evidence" value="ECO:0007669"/>
    <property type="project" value="UniProtKB-SubCell"/>
</dbReference>
<dbReference type="GO" id="GO:0005765">
    <property type="term" value="C:lysosomal membrane"/>
    <property type="evidence" value="ECO:0007669"/>
    <property type="project" value="UniProtKB-SubCell"/>
</dbReference>
<dbReference type="GO" id="GO:0005741">
    <property type="term" value="C:mitochondrial outer membrane"/>
    <property type="evidence" value="ECO:0007669"/>
    <property type="project" value="UniProtKB-SubCell"/>
</dbReference>
<dbReference type="GO" id="GO:0005634">
    <property type="term" value="C:nucleus"/>
    <property type="evidence" value="ECO:0007669"/>
    <property type="project" value="Ensembl"/>
</dbReference>
<dbReference type="GO" id="GO:0070826">
    <property type="term" value="C:paraferritin complex"/>
    <property type="evidence" value="ECO:0007669"/>
    <property type="project" value="Ensembl"/>
</dbReference>
<dbReference type="GO" id="GO:0048471">
    <property type="term" value="C:perinuclear region of cytoplasm"/>
    <property type="evidence" value="ECO:0007669"/>
    <property type="project" value="Ensembl"/>
</dbReference>
<dbReference type="GO" id="GO:0005886">
    <property type="term" value="C:plasma membrane"/>
    <property type="evidence" value="ECO:0000314"/>
    <property type="project" value="MGI"/>
</dbReference>
<dbReference type="GO" id="GO:0055037">
    <property type="term" value="C:recycling endosome"/>
    <property type="evidence" value="ECO:0000314"/>
    <property type="project" value="MGI"/>
</dbReference>
<dbReference type="GO" id="GO:0055038">
    <property type="term" value="C:recycling endosome membrane"/>
    <property type="evidence" value="ECO:0007669"/>
    <property type="project" value="UniProtKB-SubCell"/>
</dbReference>
<dbReference type="GO" id="GO:0046870">
    <property type="term" value="F:cadmium ion binding"/>
    <property type="evidence" value="ECO:0000250"/>
    <property type="project" value="UniProtKB"/>
</dbReference>
<dbReference type="GO" id="GO:0015086">
    <property type="term" value="F:cadmium ion transmembrane transporter activity"/>
    <property type="evidence" value="ECO:0007669"/>
    <property type="project" value="Ensembl"/>
</dbReference>
<dbReference type="GO" id="GO:0015087">
    <property type="term" value="F:cobalt ion transmembrane transporter activity"/>
    <property type="evidence" value="ECO:0000314"/>
    <property type="project" value="MGI"/>
</dbReference>
<dbReference type="GO" id="GO:0005375">
    <property type="term" value="F:copper ion transmembrane transporter activity"/>
    <property type="evidence" value="ECO:0007669"/>
    <property type="project" value="Ensembl"/>
</dbReference>
<dbReference type="GO" id="GO:0015093">
    <property type="term" value="F:ferrous iron transmembrane transporter activity"/>
    <property type="evidence" value="ECO:0000314"/>
    <property type="project" value="MGI"/>
</dbReference>
<dbReference type="GO" id="GO:0005381">
    <property type="term" value="F:iron ion transmembrane transporter activity"/>
    <property type="evidence" value="ECO:0000314"/>
    <property type="project" value="MGI"/>
</dbReference>
<dbReference type="GO" id="GO:0015094">
    <property type="term" value="F:lead ion transmembrane transporter activity"/>
    <property type="evidence" value="ECO:0007669"/>
    <property type="project" value="Ensembl"/>
</dbReference>
<dbReference type="GO" id="GO:0005384">
    <property type="term" value="F:manganese ion transmembrane transporter activity"/>
    <property type="evidence" value="ECO:0007669"/>
    <property type="project" value="Ensembl"/>
</dbReference>
<dbReference type="GO" id="GO:0015078">
    <property type="term" value="F:proton transmembrane transporter activity"/>
    <property type="evidence" value="ECO:0000314"/>
    <property type="project" value="MGI"/>
</dbReference>
<dbReference type="GO" id="GO:0015295">
    <property type="term" value="F:solute:proton symporter activity"/>
    <property type="evidence" value="ECO:0007669"/>
    <property type="project" value="Ensembl"/>
</dbReference>
<dbReference type="GO" id="GO:0070574">
    <property type="term" value="P:cadmium ion transmembrane transport"/>
    <property type="evidence" value="ECO:0000250"/>
    <property type="project" value="UniProtKB"/>
</dbReference>
<dbReference type="GO" id="GO:0006824">
    <property type="term" value="P:cobalt ion transport"/>
    <property type="evidence" value="ECO:0000314"/>
    <property type="project" value="MGI"/>
</dbReference>
<dbReference type="GO" id="GO:0048813">
    <property type="term" value="P:dendrite morphogenesis"/>
    <property type="evidence" value="ECO:0000315"/>
    <property type="project" value="MGI"/>
</dbReference>
<dbReference type="GO" id="GO:0048821">
    <property type="term" value="P:erythrocyte development"/>
    <property type="evidence" value="ECO:0000315"/>
    <property type="project" value="MGI"/>
</dbReference>
<dbReference type="GO" id="GO:0051649">
    <property type="term" value="P:establishment of localization in cell"/>
    <property type="evidence" value="ECO:0000315"/>
    <property type="project" value="MGI"/>
</dbReference>
<dbReference type="GO" id="GO:0006783">
    <property type="term" value="P:heme biosynthetic process"/>
    <property type="evidence" value="ECO:0000315"/>
    <property type="project" value="MGI"/>
</dbReference>
<dbReference type="GO" id="GO:0033212">
    <property type="term" value="P:iron import into cell"/>
    <property type="evidence" value="ECO:0000314"/>
    <property type="project" value="MGI"/>
</dbReference>
<dbReference type="GO" id="GO:0006826">
    <property type="term" value="P:iron ion transport"/>
    <property type="evidence" value="ECO:0000314"/>
    <property type="project" value="MGI"/>
</dbReference>
<dbReference type="GO" id="GO:0007611">
    <property type="term" value="P:learning or memory"/>
    <property type="evidence" value="ECO:0000315"/>
    <property type="project" value="MGI"/>
</dbReference>
<dbReference type="GO" id="GO:0060586">
    <property type="term" value="P:multicellular organismal-level iron ion homeostasis"/>
    <property type="evidence" value="ECO:0000315"/>
    <property type="project" value="MGI"/>
</dbReference>
<dbReference type="GO" id="GO:0006779">
    <property type="term" value="P:porphyrin-containing compound biosynthetic process"/>
    <property type="evidence" value="ECO:0000315"/>
    <property type="project" value="MGI"/>
</dbReference>
<dbReference type="GO" id="GO:0006778">
    <property type="term" value="P:porphyrin-containing compound metabolic process"/>
    <property type="evidence" value="ECO:0000315"/>
    <property type="project" value="MGI"/>
</dbReference>
<dbReference type="GO" id="GO:1902600">
    <property type="term" value="P:proton transmembrane transport"/>
    <property type="evidence" value="ECO:0000314"/>
    <property type="project" value="MGI"/>
</dbReference>
<dbReference type="GO" id="GO:0010039">
    <property type="term" value="P:response to iron ion"/>
    <property type="evidence" value="ECO:0007669"/>
    <property type="project" value="Ensembl"/>
</dbReference>
<dbReference type="HAMAP" id="MF_00221">
    <property type="entry name" value="NRAMP"/>
    <property type="match status" value="1"/>
</dbReference>
<dbReference type="InterPro" id="IPR001046">
    <property type="entry name" value="NRAMP_fam"/>
</dbReference>
<dbReference type="NCBIfam" id="TIGR01197">
    <property type="entry name" value="nramp"/>
    <property type="match status" value="1"/>
</dbReference>
<dbReference type="NCBIfam" id="NF037982">
    <property type="entry name" value="Nramp_1"/>
    <property type="match status" value="1"/>
</dbReference>
<dbReference type="PANTHER" id="PTHR11706:SF40">
    <property type="entry name" value="NATURAL RESISTANCE-ASSOCIATED MACROPHAGE PROTEIN 2"/>
    <property type="match status" value="1"/>
</dbReference>
<dbReference type="PANTHER" id="PTHR11706">
    <property type="entry name" value="SOLUTE CARRIER PROTEIN FAMILY 11 MEMBER"/>
    <property type="match status" value="1"/>
</dbReference>
<dbReference type="Pfam" id="PF01566">
    <property type="entry name" value="Nramp"/>
    <property type="match status" value="1"/>
</dbReference>
<dbReference type="PRINTS" id="PR00447">
    <property type="entry name" value="NATRESASSCMP"/>
</dbReference>
<sequence>MVLDPKEKMPDDGASGDHGDSASLGAINPAYSNSSLPHSTGDSEEPFTTYFDEKIPIPEEEYSCFSFRKLWAFTGPGFLMSIAYLDPGNIESDLQSGAVAGFKLLWVLLLATIVGLLLQRLAARLGVVTGLHLAEVCHRQYPKVPRIILWLMVELAIIGSDMQEVIGSAIAINLLSAGRVPLWGGVLITIADTFVFLFLDKYGLRKLEAFFGFLITIMALTFGYEYITVKPSQSQVLRGMFVPSCPGCRTPQVEQAVGIVGAVIMPHNMYLHSALVKSRQVNRANKQEVREANKYFFIESCIALFVSFIINVFVVSVFAEAFFEKTNKQVVEVCKNNSSPHADLFPSDNSTLAVDIYKGGVVLGCYFGPAALYIWAVGILAAGQSSTMTGTYSGQFVMEGFLNLKWSRFARVILTRSIAIIPTLLVAVFQDVEHLTGMNDFLNVLQSLQLPFALIPILTFTSLRPVMSEFSNGIGWRIAGGILVLIVCSINMYFVVVYVQELGHVALYVVAAVVSVAYLTFVFYLGWQCLIALGLSFLDCGRSYRLGLTAQPELYLLNTVDADSVVSR</sequence>
<keyword id="KW-0025">Alternative splicing</keyword>
<keyword id="KW-1003">Cell membrane</keyword>
<keyword id="KW-0225">Disease variant</keyword>
<keyword id="KW-0967">Endosome</keyword>
<keyword id="KW-0325">Glycoprotein</keyword>
<keyword id="KW-0333">Golgi apparatus</keyword>
<keyword id="KW-0406">Ion transport</keyword>
<keyword id="KW-0408">Iron</keyword>
<keyword id="KW-0410">Iron transport</keyword>
<keyword id="KW-0458">Lysosome</keyword>
<keyword id="KW-0472">Membrane</keyword>
<keyword id="KW-0496">Mitochondrion</keyword>
<keyword id="KW-1000">Mitochondrion outer membrane</keyword>
<keyword id="KW-0597">Phosphoprotein</keyword>
<keyword id="KW-1185">Reference proteome</keyword>
<keyword id="KW-0769">Symport</keyword>
<keyword id="KW-0812">Transmembrane</keyword>
<keyword id="KW-1133">Transmembrane helix</keyword>
<keyword id="KW-0813">Transport</keyword>
<keyword id="KW-0832">Ubl conjugation</keyword>
<reference key="1">
    <citation type="journal article" date="1995" name="Genomics">
        <title>Identification and characterization of a second mouse Nramp gene.</title>
        <authorList>
            <person name="Gruenheid S."/>
            <person name="Cellier M."/>
            <person name="Vidal S."/>
            <person name="Gros P."/>
        </authorList>
    </citation>
    <scope>NUCLEOTIDE SEQUENCE [MRNA] (ISOFORM 1)</scope>
</reference>
<reference key="2">
    <citation type="journal article" date="1998" name="Proc. Natl. Acad. Sci. U.S.A.">
        <title>Nramp2 is mutated in the anemic Belgrade (b) rat: evidence of a role for Nramp2 in endosomal iron transport.</title>
        <authorList>
            <person name="Fleming M.D."/>
            <person name="Romano M.A."/>
            <person name="Su M.A."/>
            <person name="Garrick L.M."/>
            <person name="Garrick M.D."/>
            <person name="Andrews N.C."/>
        </authorList>
    </citation>
    <scope>NUCLEOTIDE SEQUENCE [MRNA] (ISOFORM 1)</scope>
    <source>
        <strain>DBA</strain>
    </source>
</reference>
<reference key="3">
    <citation type="journal article" date="2005" name="Science">
        <title>The transcriptional landscape of the mammalian genome.</title>
        <authorList>
            <person name="Carninci P."/>
            <person name="Kasukawa T."/>
            <person name="Katayama S."/>
            <person name="Gough J."/>
            <person name="Frith M.C."/>
            <person name="Maeda N."/>
            <person name="Oyama R."/>
            <person name="Ravasi T."/>
            <person name="Lenhard B."/>
            <person name="Wells C."/>
            <person name="Kodzius R."/>
            <person name="Shimokawa K."/>
            <person name="Bajic V.B."/>
            <person name="Brenner S.E."/>
            <person name="Batalov S."/>
            <person name="Forrest A.R."/>
            <person name="Zavolan M."/>
            <person name="Davis M.J."/>
            <person name="Wilming L.G."/>
            <person name="Aidinis V."/>
            <person name="Allen J.E."/>
            <person name="Ambesi-Impiombato A."/>
            <person name="Apweiler R."/>
            <person name="Aturaliya R.N."/>
            <person name="Bailey T.L."/>
            <person name="Bansal M."/>
            <person name="Baxter L."/>
            <person name="Beisel K.W."/>
            <person name="Bersano T."/>
            <person name="Bono H."/>
            <person name="Chalk A.M."/>
            <person name="Chiu K.P."/>
            <person name="Choudhary V."/>
            <person name="Christoffels A."/>
            <person name="Clutterbuck D.R."/>
            <person name="Crowe M.L."/>
            <person name="Dalla E."/>
            <person name="Dalrymple B.P."/>
            <person name="de Bono B."/>
            <person name="Della Gatta G."/>
            <person name="di Bernardo D."/>
            <person name="Down T."/>
            <person name="Engstrom P."/>
            <person name="Fagiolini M."/>
            <person name="Faulkner G."/>
            <person name="Fletcher C.F."/>
            <person name="Fukushima T."/>
            <person name="Furuno M."/>
            <person name="Futaki S."/>
            <person name="Gariboldi M."/>
            <person name="Georgii-Hemming P."/>
            <person name="Gingeras T.R."/>
            <person name="Gojobori T."/>
            <person name="Green R.E."/>
            <person name="Gustincich S."/>
            <person name="Harbers M."/>
            <person name="Hayashi Y."/>
            <person name="Hensch T.K."/>
            <person name="Hirokawa N."/>
            <person name="Hill D."/>
            <person name="Huminiecki L."/>
            <person name="Iacono M."/>
            <person name="Ikeo K."/>
            <person name="Iwama A."/>
            <person name="Ishikawa T."/>
            <person name="Jakt M."/>
            <person name="Kanapin A."/>
            <person name="Katoh M."/>
            <person name="Kawasawa Y."/>
            <person name="Kelso J."/>
            <person name="Kitamura H."/>
            <person name="Kitano H."/>
            <person name="Kollias G."/>
            <person name="Krishnan S.P."/>
            <person name="Kruger A."/>
            <person name="Kummerfeld S.K."/>
            <person name="Kurochkin I.V."/>
            <person name="Lareau L.F."/>
            <person name="Lazarevic D."/>
            <person name="Lipovich L."/>
            <person name="Liu J."/>
            <person name="Liuni S."/>
            <person name="McWilliam S."/>
            <person name="Madan Babu M."/>
            <person name="Madera M."/>
            <person name="Marchionni L."/>
            <person name="Matsuda H."/>
            <person name="Matsuzawa S."/>
            <person name="Miki H."/>
            <person name="Mignone F."/>
            <person name="Miyake S."/>
            <person name="Morris K."/>
            <person name="Mottagui-Tabar S."/>
            <person name="Mulder N."/>
            <person name="Nakano N."/>
            <person name="Nakauchi H."/>
            <person name="Ng P."/>
            <person name="Nilsson R."/>
            <person name="Nishiguchi S."/>
            <person name="Nishikawa S."/>
            <person name="Nori F."/>
            <person name="Ohara O."/>
            <person name="Okazaki Y."/>
            <person name="Orlando V."/>
            <person name="Pang K.C."/>
            <person name="Pavan W.J."/>
            <person name="Pavesi G."/>
            <person name="Pesole G."/>
            <person name="Petrovsky N."/>
            <person name="Piazza S."/>
            <person name="Reed J."/>
            <person name="Reid J.F."/>
            <person name="Ring B.Z."/>
            <person name="Ringwald M."/>
            <person name="Rost B."/>
            <person name="Ruan Y."/>
            <person name="Salzberg S.L."/>
            <person name="Sandelin A."/>
            <person name="Schneider C."/>
            <person name="Schoenbach C."/>
            <person name="Sekiguchi K."/>
            <person name="Semple C.A."/>
            <person name="Seno S."/>
            <person name="Sessa L."/>
            <person name="Sheng Y."/>
            <person name="Shibata Y."/>
            <person name="Shimada H."/>
            <person name="Shimada K."/>
            <person name="Silva D."/>
            <person name="Sinclair B."/>
            <person name="Sperling S."/>
            <person name="Stupka E."/>
            <person name="Sugiura K."/>
            <person name="Sultana R."/>
            <person name="Takenaka Y."/>
            <person name="Taki K."/>
            <person name="Tammoja K."/>
            <person name="Tan S.L."/>
            <person name="Tang S."/>
            <person name="Taylor M.S."/>
            <person name="Tegner J."/>
            <person name="Teichmann S.A."/>
            <person name="Ueda H.R."/>
            <person name="van Nimwegen E."/>
            <person name="Verardo R."/>
            <person name="Wei C.L."/>
            <person name="Yagi K."/>
            <person name="Yamanishi H."/>
            <person name="Zabarovsky E."/>
            <person name="Zhu S."/>
            <person name="Zimmer A."/>
            <person name="Hide W."/>
            <person name="Bult C."/>
            <person name="Grimmond S.M."/>
            <person name="Teasdale R.D."/>
            <person name="Liu E.T."/>
            <person name="Brusic V."/>
            <person name="Quackenbush J."/>
            <person name="Wahlestedt C."/>
            <person name="Mattick J.S."/>
            <person name="Hume D.A."/>
            <person name="Kai C."/>
            <person name="Sasaki D."/>
            <person name="Tomaru Y."/>
            <person name="Fukuda S."/>
            <person name="Kanamori-Katayama M."/>
            <person name="Suzuki M."/>
            <person name="Aoki J."/>
            <person name="Arakawa T."/>
            <person name="Iida J."/>
            <person name="Imamura K."/>
            <person name="Itoh M."/>
            <person name="Kato T."/>
            <person name="Kawaji H."/>
            <person name="Kawagashira N."/>
            <person name="Kawashima T."/>
            <person name="Kojima M."/>
            <person name="Kondo S."/>
            <person name="Konno H."/>
            <person name="Nakano K."/>
            <person name="Ninomiya N."/>
            <person name="Nishio T."/>
            <person name="Okada M."/>
            <person name="Plessy C."/>
            <person name="Shibata K."/>
            <person name="Shiraki T."/>
            <person name="Suzuki S."/>
            <person name="Tagami M."/>
            <person name="Waki K."/>
            <person name="Watahiki A."/>
            <person name="Okamura-Oho Y."/>
            <person name="Suzuki H."/>
            <person name="Kawai J."/>
            <person name="Hayashizaki Y."/>
        </authorList>
    </citation>
    <scope>NUCLEOTIDE SEQUENCE [LARGE SCALE MRNA] (ISOFORM 1)</scope>
    <source>
        <strain>C57BL/6J</strain>
        <tissue>Embryo</tissue>
        <tissue>Hippocampus</tissue>
    </source>
</reference>
<reference key="4">
    <citation type="submission" date="2005-09" db="EMBL/GenBank/DDBJ databases">
        <authorList>
            <person name="Mural R.J."/>
            <person name="Adams M.D."/>
            <person name="Myers E.W."/>
            <person name="Smith H.O."/>
            <person name="Venter J.C."/>
        </authorList>
    </citation>
    <scope>NUCLEOTIDE SEQUENCE [LARGE SCALE GENOMIC DNA]</scope>
</reference>
<reference key="5">
    <citation type="journal article" date="2004" name="Genome Res.">
        <title>The status, quality, and expansion of the NIH full-length cDNA project: the Mammalian Gene Collection (MGC).</title>
        <authorList>
            <consortium name="The MGC Project Team"/>
        </authorList>
    </citation>
    <scope>NUCLEOTIDE SEQUENCE [LARGE SCALE MRNA] (ISOFORM 2)</scope>
    <source>
        <strain>FVB/N</strain>
        <tissue>Kidney</tissue>
    </source>
</reference>
<reference key="6">
    <citation type="journal article" date="2002" name="Proc. Natl. Acad. Sci. U.S.A.">
        <title>Previously uncharacterized isoforms of divalent metal transporter (DMT)-1: implications for regulation and cellular function.</title>
        <authorList>
            <person name="Hubert N."/>
            <person name="Hentze M.W."/>
        </authorList>
    </citation>
    <scope>NUCLEOTIDE SEQUENCE [MRNA] OF 1-80 (ISOFORMS 3/4)</scope>
    <scope>ALTERNATIVE SPLICING</scope>
    <source>
        <strain>C57BL/6J</strain>
        <tissue>Duodenum</tissue>
    </source>
</reference>
<reference key="7">
    <citation type="journal article" date="1999" name="Blood">
        <title>Cellular and subcellular localization of the Nramp2 iron transporter in the intestinal brush border and regulation by dietary iron.</title>
        <authorList>
            <person name="Canonne-Hergaux F."/>
            <person name="Gruenheid S."/>
            <person name="Ponka P."/>
            <person name="Gros P."/>
        </authorList>
    </citation>
    <scope>TISSUE SPECIFICITY (ISOFORM 2)</scope>
    <scope>INDUCTION (ISOFORM 2)</scope>
</reference>
<reference key="8">
    <citation type="journal article" date="2001" name="Blood">
        <title>Characterization of the iron transporter DMT1 (NRAMP2/DCT1) in red blood cells of normal and anemic mk/mk mice.</title>
        <authorList>
            <person name="Canonne-Hergaux F."/>
            <person name="Zhang A.-S."/>
            <person name="Ponka P."/>
            <person name="Gros P."/>
        </authorList>
    </citation>
    <scope>FUNCTION</scope>
    <scope>TISSUE SPECIFICITY (ISOFORM 1)</scope>
</reference>
<reference key="9">
    <citation type="journal article" date="2005" name="J. Clin. Invest.">
        <title>Slc11a2 is required for intestinal iron absorption and erythropoiesis but dispensable in placenta and liver.</title>
        <authorList>
            <person name="Gunshin H."/>
            <person name="Fujiwara Y."/>
            <person name="Custodio A.O."/>
            <person name="Direnzo C."/>
            <person name="Robine S."/>
            <person name="Andrews N.C."/>
        </authorList>
    </citation>
    <scope>FUNCTION</scope>
    <scope>DISRUPTION PHENOTYPE</scope>
</reference>
<reference key="10">
    <citation type="journal article" date="2006" name="Biochemistry">
        <title>Distinct targeting and recycling properties of two isoforms of the iron transporter DMT1 (NRAMP2, Slc11A2).</title>
        <authorList>
            <person name="Lam-Yuk-Tseung S."/>
            <person name="Gros P."/>
        </authorList>
    </citation>
    <scope>FUNCTION</scope>
    <scope>TRANSPORT ACTIVITY (ISOFORMS 1 AND 2)</scope>
    <scope>SUBCELLULAR LOCATION (ISOFORMS 1 AND 2)</scope>
</reference>
<reference key="11">
    <citation type="journal article" date="2007" name="Nat. Med.">
        <title>Ca2+ channel blockers reverse iron overload by a new mechanism via divalent metal transporter-1.</title>
        <authorList>
            <person name="Ludwiczek S."/>
            <person name="Theurl I."/>
            <person name="Muckenthaler M.U."/>
            <person name="Jakab M."/>
            <person name="Mair S.M."/>
            <person name="Theurl M."/>
            <person name="Kiss J."/>
            <person name="Paulmichl M."/>
            <person name="Hentze M.W."/>
            <person name="Ritter M."/>
            <person name="Weiss G."/>
        </authorList>
    </citation>
    <scope>NIFEDIPINE TREATMENT</scope>
</reference>
<reference key="12">
    <citation type="journal article" date="2008" name="Blood">
        <title>Regulation of the divalent metal ion transporter DMT1 and iron homeostasis by a ubiquitin-dependent mechanism involving Ndfips and WWP2.</title>
        <authorList>
            <person name="Foot N.J."/>
            <person name="Dalton H.E."/>
            <person name="Shearwin-Whyatt L.M."/>
            <person name="Dorstyn L."/>
            <person name="Tan S.S."/>
            <person name="Yang B."/>
            <person name="Kumar S."/>
        </authorList>
    </citation>
    <scope>INTERACTION WITH NDFIP1; NDFIP2 AND WWP2</scope>
    <scope>SUBCELLULAR LOCATION (ISOFORMS 1 AND 2)</scope>
    <scope>UBIQUITINATION</scope>
</reference>
<reference key="13">
    <citation type="journal article" date="2009" name="Immunity">
        <title>The phagosomal proteome in interferon-gamma-activated macrophages.</title>
        <authorList>
            <person name="Trost M."/>
            <person name="English L."/>
            <person name="Lemieux S."/>
            <person name="Courcelles M."/>
            <person name="Desjardins M."/>
            <person name="Thibault P."/>
        </authorList>
    </citation>
    <scope>PHOSPHORYLATION [LARGE SCALE ANALYSIS] AT SER-564 AND SER-567</scope>
    <scope>IDENTIFICATION BY MASS SPECTROMETRY [LARGE SCALE ANALYSIS]</scope>
</reference>
<reference key="14">
    <citation type="journal article" date="2010" name="Cell">
        <title>A tissue-specific atlas of mouse protein phosphorylation and expression.</title>
        <authorList>
            <person name="Huttlin E.L."/>
            <person name="Jedrychowski M.P."/>
            <person name="Elias J.E."/>
            <person name="Goswami T."/>
            <person name="Rad R."/>
            <person name="Beausoleil S.A."/>
            <person name="Villen J."/>
            <person name="Haas W."/>
            <person name="Sowa M.E."/>
            <person name="Gygi S.P."/>
        </authorList>
    </citation>
    <scope>PHOSPHORYLATION [LARGE SCALE ANALYSIS] AT SER-564 AND SER-567</scope>
    <scope>PHOSPHORYLATION [LARGE SCALE ANALYSIS] AT SER-556 (ISOFORM 1)</scope>
    <scope>PHOSPHORYLATION [LARGE SCALE ANALYSIS] AT SER-586 (ISOFORM 3)</scope>
    <scope>IDENTIFICATION BY MASS SPECTROMETRY [LARGE SCALE ANALYSIS]</scope>
    <source>
        <tissue>Kidney</tissue>
        <tissue>Spleen</tissue>
        <tissue>Testis</tissue>
    </source>
</reference>
<reference key="15">
    <citation type="journal article" date="2016" name="Cell Discov.">
        <title>Regulation of the divalent metal ion transporter via membrane budding.</title>
        <authorList>
            <person name="Mackenzie K."/>
            <person name="Foot N.J."/>
            <person name="Anand S."/>
            <person name="Dalton H.E."/>
            <person name="Chaudhary N."/>
            <person name="Collins B.M."/>
            <person name="Mathivanan S."/>
            <person name="Kumar S."/>
        </authorList>
    </citation>
    <scope>SUBCELLULAR LOCATION</scope>
</reference>
<reference key="16">
    <citation type="journal article" date="1997" name="Nat. Genet.">
        <title>Microcytic anaemia mice have a mutation in Nramp2, a candidate iron transporter gene.</title>
        <authorList>
            <person name="Fleming M.D."/>
            <person name="Trenor C.C. III"/>
            <person name="Su M.A."/>
            <person name="Foernzler D."/>
            <person name="Beier D.R."/>
            <person name="Dietrich W.F."/>
            <person name="Andrews N.C."/>
        </authorList>
    </citation>
    <scope>VARIANT MK ARG-185</scope>
</reference>
<feature type="chain" id="PRO_0000212595" description="Natural resistance-associated macrophage protein 2">
    <location>
        <begin position="1"/>
        <end position="568"/>
    </location>
</feature>
<feature type="topological domain" description="Cytoplasmic" evidence="3">
    <location>
        <begin position="1"/>
        <end position="69"/>
    </location>
</feature>
<feature type="transmembrane region" description="Helical" evidence="3">
    <location>
        <begin position="70"/>
        <end position="90"/>
    </location>
</feature>
<feature type="topological domain" description="Extracellular" evidence="3">
    <location>
        <begin position="91"/>
        <end position="95"/>
    </location>
</feature>
<feature type="transmembrane region" description="Helical" evidence="3">
    <location>
        <begin position="96"/>
        <end position="117"/>
    </location>
</feature>
<feature type="topological domain" description="Cytoplasmic" evidence="3">
    <location>
        <begin position="118"/>
        <end position="154"/>
    </location>
</feature>
<feature type="transmembrane region" description="Helical" evidence="3">
    <location>
        <begin position="155"/>
        <end position="175"/>
    </location>
</feature>
<feature type="topological domain" description="Extracellular" evidence="3">
    <location>
        <begin position="176"/>
        <end position="179"/>
    </location>
</feature>
<feature type="transmembrane region" description="Helical" evidence="3">
    <location>
        <begin position="180"/>
        <end position="194"/>
    </location>
</feature>
<feature type="topological domain" description="Cytoplasmic" evidence="3">
    <location>
        <begin position="195"/>
        <end position="208"/>
    </location>
</feature>
<feature type="transmembrane region" description="Helical" evidence="3">
    <location>
        <begin position="209"/>
        <end position="229"/>
    </location>
</feature>
<feature type="topological domain" description="Extracellular" evidence="3">
    <location>
        <begin position="230"/>
        <end position="255"/>
    </location>
</feature>
<feature type="transmembrane region" description="Helical" evidence="3">
    <location>
        <begin position="256"/>
        <end position="276"/>
    </location>
</feature>
<feature type="topological domain" description="Cytoplasmic" evidence="3">
    <location>
        <begin position="277"/>
        <end position="301"/>
    </location>
</feature>
<feature type="transmembrane region" description="Helical" evidence="3">
    <location>
        <begin position="302"/>
        <end position="322"/>
    </location>
</feature>
<feature type="topological domain" description="Extracellular" evidence="3">
    <location>
        <begin position="323"/>
        <end position="360"/>
    </location>
</feature>
<feature type="transmembrane region" description="Helical" evidence="3">
    <location>
        <begin position="361"/>
        <end position="381"/>
    </location>
</feature>
<feature type="topological domain" description="Cytoplasmic" evidence="3">
    <location>
        <begin position="382"/>
        <end position="408"/>
    </location>
</feature>
<feature type="transmembrane region" description="Helical" evidence="3">
    <location>
        <begin position="409"/>
        <end position="429"/>
    </location>
</feature>
<feature type="topological domain" description="Extracellular" evidence="3">
    <location>
        <begin position="430"/>
        <end position="440"/>
    </location>
</feature>
<feature type="transmembrane region" description="Helical" evidence="3">
    <location>
        <begin position="441"/>
        <end position="461"/>
    </location>
</feature>
<feature type="topological domain" description="Cytoplasmic" evidence="3">
    <location>
        <begin position="462"/>
        <end position="482"/>
    </location>
</feature>
<feature type="transmembrane region" description="Helical" evidence="3">
    <location>
        <begin position="483"/>
        <end position="503"/>
    </location>
</feature>
<feature type="topological domain" description="Extracellular" evidence="3">
    <location>
        <begin position="504"/>
        <end position="506"/>
    </location>
</feature>
<feature type="transmembrane region" description="Helical" evidence="3">
    <location>
        <begin position="507"/>
        <end position="527"/>
    </location>
</feature>
<feature type="topological domain" description="Cytoplasmic" evidence="3">
    <location>
        <begin position="528"/>
        <end position="568"/>
    </location>
</feature>
<feature type="region of interest" description="Disordered" evidence="4">
    <location>
        <begin position="1"/>
        <end position="45"/>
    </location>
</feature>
<feature type="region of interest" description="Required for early endosome targeting" evidence="2">
    <location>
        <begin position="555"/>
        <end position="559"/>
    </location>
</feature>
<feature type="compositionally biased region" description="Basic and acidic residues" evidence="4">
    <location>
        <begin position="1"/>
        <end position="20"/>
    </location>
</feature>
<feature type="compositionally biased region" description="Polar residues" evidence="4">
    <location>
        <begin position="30"/>
        <end position="40"/>
    </location>
</feature>
<feature type="modified residue" description="Phosphoserine" evidence="16 17">
    <location>
        <position position="564"/>
    </location>
</feature>
<feature type="modified residue" description="Phosphoserine" evidence="16 17">
    <location>
        <position position="567"/>
    </location>
</feature>
<feature type="glycosylation site" description="N-linked (GlcNAc...) asparagine" evidence="3">
    <location>
        <position position="336"/>
    </location>
</feature>
<feature type="glycosylation site" description="N-linked (GlcNAc...) asparagine" evidence="3">
    <location>
        <position position="349"/>
    </location>
</feature>
<feature type="splice variant" id="VSP_038145" description="In isoform 3 and isoform 4." evidence="14">
    <original>M</original>
    <variation>MGKKQPRAAAAAPNCELKSYSKSTDPQVSTM</variation>
    <location>
        <position position="1"/>
    </location>
</feature>
<feature type="splice variant" id="VSP_003596" description="In isoform 1 and isoform 3." evidence="12 13">
    <original>YRLGLTAQPELYLLNTVDADSVVSR</original>
    <variation>VSISKVLLSEDTSGGNIK</variation>
    <location>
        <begin position="544"/>
        <end position="568"/>
    </location>
</feature>
<feature type="sequence variant" description="In microcytic anemia." evidence="11">
    <original>G</original>
    <variation>R</variation>
    <location>
        <position position="185"/>
    </location>
</feature>
<feature type="sequence conflict" description="In Ref. 3; BAE28454 and 6; CAD38518." evidence="14" ref="3 6">
    <original>K</original>
    <variation>E</variation>
    <location>
        <position position="6"/>
    </location>
</feature>
<feature type="sequence conflict" description="In Ref. 2; AAC24496." evidence="14" ref="2">
    <original>R</original>
    <variation>S</variation>
    <location>
        <position position="68"/>
    </location>
</feature>
<feature type="sequence conflict" description="In Ref. 6; CAD38518." evidence="14" ref="6">
    <location>
        <begin position="69"/>
        <end position="70"/>
    </location>
</feature>
<feature type="sequence conflict" description="In Ref. 3; BAC38930." evidence="14" ref="3">
    <original>P</original>
    <variation>R</variation>
    <location>
        <position position="142"/>
    </location>
</feature>
<feature type="sequence conflict" description="In Ref. 1; AAC42051." evidence="14" ref="1">
    <original>L</original>
    <variation>V</variation>
    <location>
        <position position="182"/>
    </location>
</feature>
<feature type="modified residue" description="Phosphoserine" evidence="17">
    <location sequence="P49282-2">
        <position position="556"/>
    </location>
</feature>
<feature type="modified residue" description="Phosphoserine" evidence="17">
    <location sequence="P49282-3">
        <position position="586"/>
    </location>
</feature>
<organism>
    <name type="scientific">Mus musculus</name>
    <name type="common">Mouse</name>
    <dbReference type="NCBI Taxonomy" id="10090"/>
    <lineage>
        <taxon>Eukaryota</taxon>
        <taxon>Metazoa</taxon>
        <taxon>Chordata</taxon>
        <taxon>Craniata</taxon>
        <taxon>Vertebrata</taxon>
        <taxon>Euteleostomi</taxon>
        <taxon>Mammalia</taxon>
        <taxon>Eutheria</taxon>
        <taxon>Euarchontoglires</taxon>
        <taxon>Glires</taxon>
        <taxon>Rodentia</taxon>
        <taxon>Myomorpha</taxon>
        <taxon>Muroidea</taxon>
        <taxon>Muridae</taxon>
        <taxon>Murinae</taxon>
        <taxon>Mus</taxon>
        <taxon>Mus</taxon>
    </lineage>
</organism>
<gene>
    <name type="primary">Slc11a2</name>
    <name type="synonym">Dct1</name>
    <name type="synonym">Dmt1</name>
    <name type="synonym">Nramp2</name>
</gene>